<protein>
    <recommendedName>
        <fullName>Histone H4</fullName>
    </recommendedName>
</protein>
<reference key="1">
    <citation type="journal article" date="1988" name="Nucleic Acids Res.">
        <title>Histone genes of Volvox carteri: DNA sequence and organization of two H3-H4 gene loci.</title>
        <authorList>
            <person name="Mueller K."/>
            <person name="Schmitt R."/>
        </authorList>
    </citation>
    <scope>NUCLEOTIDE SEQUENCE [GENOMIC DNA]</scope>
    <source>
        <strain>f. Nagariensis / HK10</strain>
    </source>
</reference>
<comment type="function">
    <text>Core component of nucleosome. Nucleosomes wrap and compact DNA into chromatin, limiting DNA accessibility to the cellular machineries which require DNA as a template. Histones thereby play a central role in transcription regulation, DNA repair, DNA replication and chromosomal stability. DNA accessibility is regulated via a complex set of post-translational modifications of histones, also called histone code, and nucleosome remodeling.</text>
</comment>
<comment type="subunit">
    <text>The nucleosome is a histone octamer containing two molecules each of H2A, H2B, H3 and H4 assembled in one H3-H4 heterotetramer and two H2A-H2B heterodimers. The octamer wraps approximately 147 bp of DNA.</text>
</comment>
<comment type="subcellular location">
    <subcellularLocation>
        <location evidence="1">Nucleus</location>
    </subcellularLocation>
    <subcellularLocation>
        <location evidence="1">Chromosome</location>
    </subcellularLocation>
</comment>
<comment type="similarity">
    <text evidence="3">Belongs to the histone H4 family.</text>
</comment>
<keyword id="KW-0158">Chromosome</keyword>
<keyword id="KW-0238">DNA-binding</keyword>
<keyword id="KW-0544">Nucleosome core</keyword>
<keyword id="KW-0539">Nucleus</keyword>
<feature type="initiator methionine" description="Removed" evidence="3">
    <location>
        <position position="1"/>
    </location>
</feature>
<feature type="chain" id="PRO_0000158372" description="Histone H4">
    <location>
        <begin position="2"/>
        <end position="103"/>
    </location>
</feature>
<feature type="DNA-binding region">
    <location>
        <begin position="17"/>
        <end position="21"/>
    </location>
</feature>
<feature type="region of interest" description="Disordered" evidence="2">
    <location>
        <begin position="1"/>
        <end position="20"/>
    </location>
</feature>
<feature type="compositionally biased region" description="Gly residues" evidence="2">
    <location>
        <begin position="1"/>
        <end position="14"/>
    </location>
</feature>
<proteinExistence type="inferred from homology"/>
<name>H4_VOLCA</name>
<dbReference type="EMBL" id="X06963">
    <property type="protein sequence ID" value="CAA30034.1"/>
    <property type="molecule type" value="Genomic_DNA"/>
</dbReference>
<dbReference type="EMBL" id="X06964">
    <property type="protein sequence ID" value="CAA30036.1"/>
    <property type="molecule type" value="Genomic_DNA"/>
</dbReference>
<dbReference type="PIR" id="S00939">
    <property type="entry name" value="S00939"/>
</dbReference>
<dbReference type="BMRB" id="P08436"/>
<dbReference type="SMR" id="P08436"/>
<dbReference type="KEGG" id="vcn:VOLCADRAFT_102100"/>
<dbReference type="KEGG" id="vcn:VOLCADRAFT_102370"/>
<dbReference type="KEGG" id="vcn:VOLCADRAFT_55291"/>
<dbReference type="KEGG" id="vcn:VOLCADRAFT_55394"/>
<dbReference type="KEGG" id="vcn:VOLCADRAFT_55542"/>
<dbReference type="KEGG" id="vcn:VOLCADRAFT_56769"/>
<dbReference type="KEGG" id="vcn:VOLCADRAFT_57217"/>
<dbReference type="KEGG" id="vcn:VOLCADRAFT_57294"/>
<dbReference type="KEGG" id="vcn:VOLCADRAFT_63165"/>
<dbReference type="KEGG" id="vcn:VOLCADRAFT_65854"/>
<dbReference type="KEGG" id="vcn:VOLCADRAFT_67420"/>
<dbReference type="KEGG" id="vcn:VOLCADRAFT_78755"/>
<dbReference type="KEGG" id="vcn:VOLCADRAFT_88140"/>
<dbReference type="OMA" id="RRNRNMS"/>
<dbReference type="GO" id="GO:0000786">
    <property type="term" value="C:nucleosome"/>
    <property type="evidence" value="ECO:0007669"/>
    <property type="project" value="UniProtKB-KW"/>
</dbReference>
<dbReference type="GO" id="GO:0005634">
    <property type="term" value="C:nucleus"/>
    <property type="evidence" value="ECO:0007669"/>
    <property type="project" value="UniProtKB-SubCell"/>
</dbReference>
<dbReference type="GO" id="GO:0003677">
    <property type="term" value="F:DNA binding"/>
    <property type="evidence" value="ECO:0007669"/>
    <property type="project" value="UniProtKB-KW"/>
</dbReference>
<dbReference type="GO" id="GO:0046982">
    <property type="term" value="F:protein heterodimerization activity"/>
    <property type="evidence" value="ECO:0007669"/>
    <property type="project" value="InterPro"/>
</dbReference>
<dbReference type="GO" id="GO:0030527">
    <property type="term" value="F:structural constituent of chromatin"/>
    <property type="evidence" value="ECO:0007669"/>
    <property type="project" value="InterPro"/>
</dbReference>
<dbReference type="CDD" id="cd22912">
    <property type="entry name" value="HFD_H4"/>
    <property type="match status" value="1"/>
</dbReference>
<dbReference type="FunFam" id="1.10.20.10:FF:000002">
    <property type="entry name" value="Histone H4"/>
    <property type="match status" value="1"/>
</dbReference>
<dbReference type="Gene3D" id="1.10.20.10">
    <property type="entry name" value="Histone, subunit A"/>
    <property type="match status" value="1"/>
</dbReference>
<dbReference type="InterPro" id="IPR035425">
    <property type="entry name" value="CENP-T/H4_C"/>
</dbReference>
<dbReference type="InterPro" id="IPR009072">
    <property type="entry name" value="Histone-fold"/>
</dbReference>
<dbReference type="InterPro" id="IPR001951">
    <property type="entry name" value="Histone_H4"/>
</dbReference>
<dbReference type="InterPro" id="IPR019809">
    <property type="entry name" value="Histone_H4_CS"/>
</dbReference>
<dbReference type="PANTHER" id="PTHR10484">
    <property type="entry name" value="HISTONE H4"/>
    <property type="match status" value="1"/>
</dbReference>
<dbReference type="Pfam" id="PF15511">
    <property type="entry name" value="CENP-T_C"/>
    <property type="match status" value="1"/>
</dbReference>
<dbReference type="PRINTS" id="PR00623">
    <property type="entry name" value="HISTONEH4"/>
</dbReference>
<dbReference type="SMART" id="SM00417">
    <property type="entry name" value="H4"/>
    <property type="match status" value="1"/>
</dbReference>
<dbReference type="SUPFAM" id="SSF47113">
    <property type="entry name" value="Histone-fold"/>
    <property type="match status" value="1"/>
</dbReference>
<dbReference type="PROSITE" id="PS00047">
    <property type="entry name" value="HISTONE_H4"/>
    <property type="match status" value="1"/>
</dbReference>
<accession>P08436</accession>
<gene>
    <name type="primary">H4-I</name>
</gene>
<gene>
    <name type="primary">H4-II</name>
</gene>
<sequence>MSGRGKGGKGLGKGGAKRHRKVLRDNIQGITKPAIRRLARRGGVKRISGLIYEETRTVLKNFLENVIRDSVTYTEHARRKTVTAMDVVYALKRQGRTLYGFGG</sequence>
<evidence type="ECO:0000250" key="1"/>
<evidence type="ECO:0000256" key="2">
    <source>
        <dbReference type="SAM" id="MobiDB-lite"/>
    </source>
</evidence>
<evidence type="ECO:0000305" key="3"/>
<organism>
    <name type="scientific">Volvox carteri</name>
    <name type="common">Green alga</name>
    <dbReference type="NCBI Taxonomy" id="3067"/>
    <lineage>
        <taxon>Eukaryota</taxon>
        <taxon>Viridiplantae</taxon>
        <taxon>Chlorophyta</taxon>
        <taxon>core chlorophytes</taxon>
        <taxon>Chlorophyceae</taxon>
        <taxon>CS clade</taxon>
        <taxon>Chlamydomonadales</taxon>
        <taxon>Volvocaceae</taxon>
        <taxon>Volvox</taxon>
    </lineage>
</organism>